<evidence type="ECO:0000255" key="1">
    <source>
        <dbReference type="HAMAP-Rule" id="MF_01318"/>
    </source>
</evidence>
<evidence type="ECO:0000305" key="2"/>
<sequence length="230" mass="24706">MAKHGKRYLEAAKKVDSTKFYSVDEAMKLAKETSYANFDATIEVAYNLSVDPKQADQQIRGALVLPNGTGKSKKVVVFAEGPQADQAKEAGADEVGSDDLVEKVQNGYLDFDVVIATPMMMAKVGRLGRILGPKGLMPNPKTGTVTMDVAKAVENQKAGQVEYRVDKQGLIHAPIGKASFDADKLAQNFDALRDVILRARPASAKGQYIKSVAVSATFGPGIHLDPLNLD</sequence>
<protein>
    <recommendedName>
        <fullName evidence="1">Large ribosomal subunit protein uL1</fullName>
    </recommendedName>
    <alternativeName>
        <fullName evidence="2">50S ribosomal protein L1</fullName>
    </alternativeName>
</protein>
<dbReference type="EMBL" id="CP000413">
    <property type="protein sequence ID" value="ABJ59762.1"/>
    <property type="molecule type" value="Genomic_DNA"/>
</dbReference>
<dbReference type="RefSeq" id="WP_003647774.1">
    <property type="nucleotide sequence ID" value="NZ_WBMG01000001.1"/>
</dbReference>
<dbReference type="SMR" id="Q045W0"/>
<dbReference type="GeneID" id="48924373"/>
<dbReference type="KEGG" id="lga:LGAS_0357"/>
<dbReference type="HOGENOM" id="CLU_062853_0_0_9"/>
<dbReference type="BioCyc" id="LGAS324831:G1G6Y-355-MONOMER"/>
<dbReference type="Proteomes" id="UP000000664">
    <property type="component" value="Chromosome"/>
</dbReference>
<dbReference type="GO" id="GO:0015934">
    <property type="term" value="C:large ribosomal subunit"/>
    <property type="evidence" value="ECO:0007669"/>
    <property type="project" value="InterPro"/>
</dbReference>
<dbReference type="GO" id="GO:0019843">
    <property type="term" value="F:rRNA binding"/>
    <property type="evidence" value="ECO:0007669"/>
    <property type="project" value="UniProtKB-UniRule"/>
</dbReference>
<dbReference type="GO" id="GO:0003735">
    <property type="term" value="F:structural constituent of ribosome"/>
    <property type="evidence" value="ECO:0007669"/>
    <property type="project" value="InterPro"/>
</dbReference>
<dbReference type="GO" id="GO:0000049">
    <property type="term" value="F:tRNA binding"/>
    <property type="evidence" value="ECO:0007669"/>
    <property type="project" value="UniProtKB-KW"/>
</dbReference>
<dbReference type="GO" id="GO:0006417">
    <property type="term" value="P:regulation of translation"/>
    <property type="evidence" value="ECO:0007669"/>
    <property type="project" value="UniProtKB-KW"/>
</dbReference>
<dbReference type="GO" id="GO:0006412">
    <property type="term" value="P:translation"/>
    <property type="evidence" value="ECO:0007669"/>
    <property type="project" value="UniProtKB-UniRule"/>
</dbReference>
<dbReference type="CDD" id="cd00403">
    <property type="entry name" value="Ribosomal_L1"/>
    <property type="match status" value="1"/>
</dbReference>
<dbReference type="FunFam" id="3.40.50.790:FF:000001">
    <property type="entry name" value="50S ribosomal protein L1"/>
    <property type="match status" value="1"/>
</dbReference>
<dbReference type="Gene3D" id="3.30.190.20">
    <property type="match status" value="1"/>
</dbReference>
<dbReference type="Gene3D" id="3.40.50.790">
    <property type="match status" value="1"/>
</dbReference>
<dbReference type="HAMAP" id="MF_01318_B">
    <property type="entry name" value="Ribosomal_uL1_B"/>
    <property type="match status" value="1"/>
</dbReference>
<dbReference type="InterPro" id="IPR005878">
    <property type="entry name" value="Ribosom_uL1_bac-type"/>
</dbReference>
<dbReference type="InterPro" id="IPR002143">
    <property type="entry name" value="Ribosomal_uL1"/>
</dbReference>
<dbReference type="InterPro" id="IPR023674">
    <property type="entry name" value="Ribosomal_uL1-like"/>
</dbReference>
<dbReference type="InterPro" id="IPR028364">
    <property type="entry name" value="Ribosomal_uL1/biogenesis"/>
</dbReference>
<dbReference type="InterPro" id="IPR016095">
    <property type="entry name" value="Ribosomal_uL1_3-a/b-sand"/>
</dbReference>
<dbReference type="InterPro" id="IPR023673">
    <property type="entry name" value="Ribosomal_uL1_CS"/>
</dbReference>
<dbReference type="NCBIfam" id="TIGR01169">
    <property type="entry name" value="rplA_bact"/>
    <property type="match status" value="1"/>
</dbReference>
<dbReference type="PANTHER" id="PTHR36427">
    <property type="entry name" value="54S RIBOSOMAL PROTEIN L1, MITOCHONDRIAL"/>
    <property type="match status" value="1"/>
</dbReference>
<dbReference type="PANTHER" id="PTHR36427:SF3">
    <property type="entry name" value="LARGE RIBOSOMAL SUBUNIT PROTEIN UL1M"/>
    <property type="match status" value="1"/>
</dbReference>
<dbReference type="Pfam" id="PF00687">
    <property type="entry name" value="Ribosomal_L1"/>
    <property type="match status" value="1"/>
</dbReference>
<dbReference type="PIRSF" id="PIRSF002155">
    <property type="entry name" value="Ribosomal_L1"/>
    <property type="match status" value="1"/>
</dbReference>
<dbReference type="SUPFAM" id="SSF56808">
    <property type="entry name" value="Ribosomal protein L1"/>
    <property type="match status" value="1"/>
</dbReference>
<dbReference type="PROSITE" id="PS01199">
    <property type="entry name" value="RIBOSOMAL_L1"/>
    <property type="match status" value="1"/>
</dbReference>
<gene>
    <name evidence="1" type="primary">rplA</name>
    <name type="ordered locus">LGAS_0357</name>
</gene>
<keyword id="KW-0678">Repressor</keyword>
<keyword id="KW-0687">Ribonucleoprotein</keyword>
<keyword id="KW-0689">Ribosomal protein</keyword>
<keyword id="KW-0694">RNA-binding</keyword>
<keyword id="KW-0699">rRNA-binding</keyword>
<keyword id="KW-0810">Translation regulation</keyword>
<keyword id="KW-0820">tRNA-binding</keyword>
<organism>
    <name type="scientific">Lactobacillus gasseri (strain ATCC 33323 / DSM 20243 / BCRC 14619 / CIP 102991 / JCM 1131 / KCTC 3163 / NCIMB 11718 / NCTC 13722 / AM63)</name>
    <dbReference type="NCBI Taxonomy" id="324831"/>
    <lineage>
        <taxon>Bacteria</taxon>
        <taxon>Bacillati</taxon>
        <taxon>Bacillota</taxon>
        <taxon>Bacilli</taxon>
        <taxon>Lactobacillales</taxon>
        <taxon>Lactobacillaceae</taxon>
        <taxon>Lactobacillus</taxon>
    </lineage>
</organism>
<feature type="chain" id="PRO_0000308031" description="Large ribosomal subunit protein uL1">
    <location>
        <begin position="1"/>
        <end position="230"/>
    </location>
</feature>
<comment type="function">
    <text evidence="1">Binds directly to 23S rRNA. The L1 stalk is quite mobile in the ribosome, and is involved in E site tRNA release.</text>
</comment>
<comment type="function">
    <text evidence="1">Protein L1 is also a translational repressor protein, it controls the translation of the L11 operon by binding to its mRNA.</text>
</comment>
<comment type="subunit">
    <text evidence="1">Part of the 50S ribosomal subunit.</text>
</comment>
<comment type="similarity">
    <text evidence="1">Belongs to the universal ribosomal protein uL1 family.</text>
</comment>
<accession>Q045W0</accession>
<reference key="1">
    <citation type="journal article" date="2006" name="Proc. Natl. Acad. Sci. U.S.A.">
        <title>Comparative genomics of the lactic acid bacteria.</title>
        <authorList>
            <person name="Makarova K.S."/>
            <person name="Slesarev A."/>
            <person name="Wolf Y.I."/>
            <person name="Sorokin A."/>
            <person name="Mirkin B."/>
            <person name="Koonin E.V."/>
            <person name="Pavlov A."/>
            <person name="Pavlova N."/>
            <person name="Karamychev V."/>
            <person name="Polouchine N."/>
            <person name="Shakhova V."/>
            <person name="Grigoriev I."/>
            <person name="Lou Y."/>
            <person name="Rohksar D."/>
            <person name="Lucas S."/>
            <person name="Huang K."/>
            <person name="Goodstein D.M."/>
            <person name="Hawkins T."/>
            <person name="Plengvidhya V."/>
            <person name="Welker D."/>
            <person name="Hughes J."/>
            <person name="Goh Y."/>
            <person name="Benson A."/>
            <person name="Baldwin K."/>
            <person name="Lee J.-H."/>
            <person name="Diaz-Muniz I."/>
            <person name="Dosti B."/>
            <person name="Smeianov V."/>
            <person name="Wechter W."/>
            <person name="Barabote R."/>
            <person name="Lorca G."/>
            <person name="Altermann E."/>
            <person name="Barrangou R."/>
            <person name="Ganesan B."/>
            <person name="Xie Y."/>
            <person name="Rawsthorne H."/>
            <person name="Tamir D."/>
            <person name="Parker C."/>
            <person name="Breidt F."/>
            <person name="Broadbent J.R."/>
            <person name="Hutkins R."/>
            <person name="O'Sullivan D."/>
            <person name="Steele J."/>
            <person name="Unlu G."/>
            <person name="Saier M.H. Jr."/>
            <person name="Klaenhammer T."/>
            <person name="Richardson P."/>
            <person name="Kozyavkin S."/>
            <person name="Weimer B.C."/>
            <person name="Mills D.A."/>
        </authorList>
    </citation>
    <scope>NUCLEOTIDE SEQUENCE [LARGE SCALE GENOMIC DNA]</scope>
    <source>
        <strain>ATCC 33323 / DSM 20243 / BCRC 14619 / CIP 102991 / JCM 1131 / KCTC 3163 / NCIMB 11718 / NCTC 13722 / AM63</strain>
    </source>
</reference>
<name>RL1_LACGA</name>
<proteinExistence type="inferred from homology"/>